<protein>
    <recommendedName>
        <fullName>Glutathione S-transferase</fullName>
        <ecNumber>2.5.1.18</ecNumber>
    </recommendedName>
    <alternativeName>
        <fullName>GST class-phi</fullName>
    </alternativeName>
</protein>
<proteinExistence type="evidence at protein level"/>
<keyword id="KW-0963">Cytoplasm</keyword>
<keyword id="KW-0903">Direct protein sequencing</keyword>
<keyword id="KW-0808">Transferase</keyword>
<evidence type="ECO:0000250" key="1"/>
<evidence type="ECO:0000269" key="2">
    <source>
    </source>
</evidence>
<evidence type="ECO:0000305" key="3"/>
<feature type="initiator methionine" description="Removed" evidence="2">
    <location>
        <position position="1"/>
    </location>
</feature>
<feature type="chain" id="PRO_0000185855" description="Glutathione S-transferase">
    <location>
        <begin position="2"/>
        <end position="217"/>
    </location>
</feature>
<feature type="domain" description="GST N-terminal">
    <location>
        <begin position="2"/>
        <end position="82"/>
    </location>
</feature>
<feature type="domain" description="GST C-terminal">
    <location>
        <begin position="91"/>
        <end position="217"/>
    </location>
</feature>
<feature type="binding site" evidence="1">
    <location>
        <position position="11"/>
    </location>
    <ligand>
        <name>glutathione</name>
        <dbReference type="ChEBI" id="CHEBI:57925"/>
    </ligand>
</feature>
<feature type="binding site" evidence="1">
    <location>
        <begin position="40"/>
        <end position="41"/>
    </location>
    <ligand>
        <name>glutathione</name>
        <dbReference type="ChEBI" id="CHEBI:57925"/>
    </ligand>
</feature>
<feature type="binding site" evidence="1">
    <location>
        <begin position="53"/>
        <end position="54"/>
    </location>
    <ligand>
        <name>glutathione</name>
        <dbReference type="ChEBI" id="CHEBI:57925"/>
    </ligand>
</feature>
<feature type="binding site" evidence="1">
    <location>
        <begin position="66"/>
        <end position="67"/>
    </location>
    <ligand>
        <name>glutathione</name>
        <dbReference type="ChEBI" id="CHEBI:57925"/>
    </ligand>
</feature>
<name>GSTF_SILVU</name>
<organism>
    <name type="scientific">Silene vulgaris</name>
    <name type="common">Bladder campion</name>
    <name type="synonym">Silene cucubalus</name>
    <dbReference type="NCBI Taxonomy" id="42043"/>
    <lineage>
        <taxon>Eukaryota</taxon>
        <taxon>Viridiplantae</taxon>
        <taxon>Streptophyta</taxon>
        <taxon>Embryophyta</taxon>
        <taxon>Tracheophyta</taxon>
        <taxon>Spermatophyta</taxon>
        <taxon>Magnoliopsida</taxon>
        <taxon>eudicotyledons</taxon>
        <taxon>Gunneridae</taxon>
        <taxon>Pentapetalae</taxon>
        <taxon>Caryophyllales</taxon>
        <taxon>Caryophyllaceae</taxon>
        <taxon>Sileneae</taxon>
        <taxon>Silene</taxon>
        <taxon>Silene subgen. Behenantha</taxon>
        <taxon>Silene sect. Behenantha</taxon>
    </lineage>
</organism>
<gene>
    <name type="primary">GST</name>
</gene>
<accession>Q04522</accession>
<sequence>MTIKVHGNPRSTATQRVLVALYEKHLEFEFVPIDMGAGGHKQPSYLALNPFGQVPALEDGEIKLFESRAITKYLAYTHDHQNEGTSLIHKEKHEMAAQLVWEEVEAHQFDPVASKLAWELVFKGIFGMQTDTTVVEENEAKLAKVLDVYEARLTESEYLGANDSFTLVDLHHLPLLGYLMGTQVKKLFEERAHVSAWCKKILARPSWEKTLALQKQA</sequence>
<dbReference type="EC" id="2.5.1.18"/>
<dbReference type="EMBL" id="M84968">
    <property type="protein sequence ID" value="AAA33930.1"/>
    <property type="molecule type" value="mRNA"/>
</dbReference>
<dbReference type="EMBL" id="M84969">
    <property type="protein sequence ID" value="AAA33931.1"/>
    <property type="molecule type" value="Genomic_DNA"/>
</dbReference>
<dbReference type="SMR" id="Q04522"/>
<dbReference type="GO" id="GO:0005737">
    <property type="term" value="C:cytoplasm"/>
    <property type="evidence" value="ECO:0007669"/>
    <property type="project" value="UniProtKB-SubCell"/>
</dbReference>
<dbReference type="GO" id="GO:0043295">
    <property type="term" value="F:glutathione binding"/>
    <property type="evidence" value="ECO:0007669"/>
    <property type="project" value="TreeGrafter"/>
</dbReference>
<dbReference type="GO" id="GO:0004364">
    <property type="term" value="F:glutathione transferase activity"/>
    <property type="evidence" value="ECO:0007669"/>
    <property type="project" value="UniProtKB-EC"/>
</dbReference>
<dbReference type="GO" id="GO:0006749">
    <property type="term" value="P:glutathione metabolic process"/>
    <property type="evidence" value="ECO:0007669"/>
    <property type="project" value="TreeGrafter"/>
</dbReference>
<dbReference type="GO" id="GO:0009407">
    <property type="term" value="P:toxin catabolic process"/>
    <property type="evidence" value="ECO:0007669"/>
    <property type="project" value="UniProtKB-ARBA"/>
</dbReference>
<dbReference type="CDD" id="cd03187">
    <property type="entry name" value="GST_C_Phi"/>
    <property type="match status" value="1"/>
</dbReference>
<dbReference type="CDD" id="cd03053">
    <property type="entry name" value="GST_N_Phi"/>
    <property type="match status" value="1"/>
</dbReference>
<dbReference type="FunFam" id="1.20.1050.10:FF:000004">
    <property type="entry name" value="Glutathione S-transferase F2"/>
    <property type="match status" value="1"/>
</dbReference>
<dbReference type="FunFam" id="3.40.30.10:FF:000016">
    <property type="entry name" value="Glutathione S-transferase F2"/>
    <property type="match status" value="1"/>
</dbReference>
<dbReference type="Gene3D" id="1.20.1050.10">
    <property type="match status" value="1"/>
</dbReference>
<dbReference type="Gene3D" id="3.40.30.10">
    <property type="entry name" value="Glutaredoxin"/>
    <property type="match status" value="1"/>
</dbReference>
<dbReference type="InterPro" id="IPR010987">
    <property type="entry name" value="Glutathione-S-Trfase_C-like"/>
</dbReference>
<dbReference type="InterPro" id="IPR036282">
    <property type="entry name" value="Glutathione-S-Trfase_C_sf"/>
</dbReference>
<dbReference type="InterPro" id="IPR040079">
    <property type="entry name" value="Glutathione_S-Trfase"/>
</dbReference>
<dbReference type="InterPro" id="IPR004045">
    <property type="entry name" value="Glutathione_S-Trfase_N"/>
</dbReference>
<dbReference type="InterPro" id="IPR004046">
    <property type="entry name" value="GST_C"/>
</dbReference>
<dbReference type="InterPro" id="IPR034347">
    <property type="entry name" value="GST_Phi_C"/>
</dbReference>
<dbReference type="InterPro" id="IPR036249">
    <property type="entry name" value="Thioredoxin-like_sf"/>
</dbReference>
<dbReference type="PANTHER" id="PTHR43900:SF47">
    <property type="entry name" value="GLUTATHIONE S-TRANSFERASE F6-RELATED"/>
    <property type="match status" value="1"/>
</dbReference>
<dbReference type="PANTHER" id="PTHR43900">
    <property type="entry name" value="GLUTATHIONE S-TRANSFERASE RHO"/>
    <property type="match status" value="1"/>
</dbReference>
<dbReference type="Pfam" id="PF00043">
    <property type="entry name" value="GST_C"/>
    <property type="match status" value="1"/>
</dbReference>
<dbReference type="Pfam" id="PF02798">
    <property type="entry name" value="GST_N"/>
    <property type="match status" value="1"/>
</dbReference>
<dbReference type="SFLD" id="SFLDS00019">
    <property type="entry name" value="Glutathione_Transferase_(cytos"/>
    <property type="match status" value="1"/>
</dbReference>
<dbReference type="SFLD" id="SFLDG01154">
    <property type="entry name" value="Main.5:_Phi-like"/>
    <property type="match status" value="1"/>
</dbReference>
<dbReference type="SUPFAM" id="SSF47616">
    <property type="entry name" value="GST C-terminal domain-like"/>
    <property type="match status" value="1"/>
</dbReference>
<dbReference type="SUPFAM" id="SSF52833">
    <property type="entry name" value="Thioredoxin-like"/>
    <property type="match status" value="1"/>
</dbReference>
<dbReference type="PROSITE" id="PS50405">
    <property type="entry name" value="GST_CTER"/>
    <property type="match status" value="1"/>
</dbReference>
<dbReference type="PROSITE" id="PS50404">
    <property type="entry name" value="GST_NTER"/>
    <property type="match status" value="1"/>
</dbReference>
<reference key="1">
    <citation type="journal article" date="1992" name="Plant Physiol.">
        <title>Nucleotide sequence of a cDNA encoding a constitutively expressed glutathione-S-transferase from cell suspension cultures of Silene cucubalus.</title>
        <authorList>
            <person name="Kutchan T.M."/>
            <person name="Hochberger A."/>
        </authorList>
    </citation>
    <scope>NUCLEOTIDE SEQUENCE [MRNA]</scope>
    <scope>PROTEIN SEQUENCE OF 2-40; 124-141 AND 146-153</scope>
</reference>
<reference key="2">
    <citation type="journal article" date="1992" name="Plant Physiol.">
        <title>Nucleotide sequence of the gene for a glutathione-S-transferase from cell suspension cultures of Silene cucubalus.</title>
        <authorList>
            <person name="Praendl R."/>
            <person name="Kutchan T.M."/>
        </authorList>
    </citation>
    <scope>NUCLEOTIDE SEQUENCE [GENOMIC DNA]</scope>
</reference>
<comment type="function">
    <text>Conjugation of reduced glutathione to a wide number of exogenous and endogenous hydrophobic electrophiles.</text>
</comment>
<comment type="catalytic activity">
    <reaction>
        <text>RX + glutathione = an S-substituted glutathione + a halide anion + H(+)</text>
        <dbReference type="Rhea" id="RHEA:16437"/>
        <dbReference type="ChEBI" id="CHEBI:15378"/>
        <dbReference type="ChEBI" id="CHEBI:16042"/>
        <dbReference type="ChEBI" id="CHEBI:17792"/>
        <dbReference type="ChEBI" id="CHEBI:57925"/>
        <dbReference type="ChEBI" id="CHEBI:90779"/>
        <dbReference type="EC" id="2.5.1.18"/>
    </reaction>
</comment>
<comment type="subcellular location">
    <subcellularLocation>
        <location>Cytoplasm</location>
    </subcellularLocation>
</comment>
<comment type="similarity">
    <text evidence="3">Belongs to the GST superfamily. Phi family.</text>
</comment>